<reference key="1">
    <citation type="journal article" date="2002" name="Proc. Natl. Acad. Sci. U.S.A.">
        <title>The genome sequence of the facultative intracellular pathogen Brucella melitensis.</title>
        <authorList>
            <person name="DelVecchio V.G."/>
            <person name="Kapatral V."/>
            <person name="Redkar R.J."/>
            <person name="Patra G."/>
            <person name="Mujer C."/>
            <person name="Los T."/>
            <person name="Ivanova N."/>
            <person name="Anderson I."/>
            <person name="Bhattacharyya A."/>
            <person name="Lykidis A."/>
            <person name="Reznik G."/>
            <person name="Jablonski L."/>
            <person name="Larsen N."/>
            <person name="D'Souza M."/>
            <person name="Bernal A."/>
            <person name="Mazur M."/>
            <person name="Goltsman E."/>
            <person name="Selkov E."/>
            <person name="Elzer P.H."/>
            <person name="Hagius S."/>
            <person name="O'Callaghan D."/>
            <person name="Letesson J.-J."/>
            <person name="Haselkorn R."/>
            <person name="Kyrpides N.C."/>
            <person name="Overbeek R."/>
        </authorList>
    </citation>
    <scope>NUCLEOTIDE SEQUENCE [LARGE SCALE GENOMIC DNA]</scope>
    <source>
        <strain>ATCC 23456 / CCUG 17765 / NCTC 10094 / 16M</strain>
    </source>
</reference>
<organism>
    <name type="scientific">Brucella melitensis biotype 1 (strain ATCC 23456 / CCUG 17765 / NCTC 10094 / 16M)</name>
    <dbReference type="NCBI Taxonomy" id="224914"/>
    <lineage>
        <taxon>Bacteria</taxon>
        <taxon>Pseudomonadati</taxon>
        <taxon>Pseudomonadota</taxon>
        <taxon>Alphaproteobacteria</taxon>
        <taxon>Hyphomicrobiales</taxon>
        <taxon>Brucellaceae</taxon>
        <taxon>Brucella/Ochrobactrum group</taxon>
        <taxon>Brucella</taxon>
    </lineage>
</organism>
<sequence length="107" mass="11365">MRDMMGMMKQAKELQAKMKAMQDEIATMEASASSGGGLVTVTLSGKGTLSALKIDPSLMKEDEVEILEDLIIAAHNDAKAKLEAAMAEKTQSLTAGLPIPPGFKLPF</sequence>
<protein>
    <recommendedName>
        <fullName evidence="1">Nucleoid-associated protein BMEI1909</fullName>
    </recommendedName>
</protein>
<feature type="chain" id="PRO_0000170371" description="Nucleoid-associated protein BMEI1909">
    <location>
        <begin position="1"/>
        <end position="107"/>
    </location>
</feature>
<keyword id="KW-0963">Cytoplasm</keyword>
<keyword id="KW-0238">DNA-binding</keyword>
<evidence type="ECO:0000255" key="1">
    <source>
        <dbReference type="HAMAP-Rule" id="MF_00274"/>
    </source>
</evidence>
<gene>
    <name type="ordered locus">BMEI1909</name>
</gene>
<comment type="function">
    <text evidence="1">Binds to DNA and alters its conformation. May be involved in regulation of gene expression, nucleoid organization and DNA protection.</text>
</comment>
<comment type="subunit">
    <text evidence="1">Homodimer.</text>
</comment>
<comment type="subcellular location">
    <subcellularLocation>
        <location evidence="1">Cytoplasm</location>
        <location evidence="1">Nucleoid</location>
    </subcellularLocation>
</comment>
<comment type="similarity">
    <text evidence="1">Belongs to the YbaB/EbfC family.</text>
</comment>
<proteinExistence type="inferred from homology"/>
<dbReference type="EMBL" id="AE008917">
    <property type="protein sequence ID" value="AAL53090.1"/>
    <property type="molecule type" value="Genomic_DNA"/>
</dbReference>
<dbReference type="PIR" id="AG3490">
    <property type="entry name" value="AG3490"/>
</dbReference>
<dbReference type="RefSeq" id="WP_002965280.1">
    <property type="nucleotide sequence ID" value="NZ_GG703778.1"/>
</dbReference>
<dbReference type="SMR" id="P67260"/>
<dbReference type="KEGG" id="bme:BMEI1909"/>
<dbReference type="KEGG" id="bmel:DK63_1580"/>
<dbReference type="PATRIC" id="fig|224914.52.peg.1667"/>
<dbReference type="eggNOG" id="COG0718">
    <property type="taxonomic scope" value="Bacteria"/>
</dbReference>
<dbReference type="PhylomeDB" id="P67260"/>
<dbReference type="Proteomes" id="UP000000419">
    <property type="component" value="Chromosome I"/>
</dbReference>
<dbReference type="GO" id="GO:0043590">
    <property type="term" value="C:bacterial nucleoid"/>
    <property type="evidence" value="ECO:0007669"/>
    <property type="project" value="UniProtKB-UniRule"/>
</dbReference>
<dbReference type="GO" id="GO:0005829">
    <property type="term" value="C:cytosol"/>
    <property type="evidence" value="ECO:0007669"/>
    <property type="project" value="TreeGrafter"/>
</dbReference>
<dbReference type="GO" id="GO:0003677">
    <property type="term" value="F:DNA binding"/>
    <property type="evidence" value="ECO:0007669"/>
    <property type="project" value="UniProtKB-UniRule"/>
</dbReference>
<dbReference type="Gene3D" id="3.30.1310.10">
    <property type="entry name" value="Nucleoid-associated protein YbaB-like domain"/>
    <property type="match status" value="1"/>
</dbReference>
<dbReference type="HAMAP" id="MF_00274">
    <property type="entry name" value="DNA_YbaB_EbfC"/>
    <property type="match status" value="1"/>
</dbReference>
<dbReference type="InterPro" id="IPR036894">
    <property type="entry name" value="YbaB-like_sf"/>
</dbReference>
<dbReference type="InterPro" id="IPR004401">
    <property type="entry name" value="YbaB/EbfC"/>
</dbReference>
<dbReference type="NCBIfam" id="TIGR00103">
    <property type="entry name" value="DNA_YbaB_EbfC"/>
    <property type="match status" value="1"/>
</dbReference>
<dbReference type="PANTHER" id="PTHR33449">
    <property type="entry name" value="NUCLEOID-ASSOCIATED PROTEIN YBAB"/>
    <property type="match status" value="1"/>
</dbReference>
<dbReference type="PANTHER" id="PTHR33449:SF1">
    <property type="entry name" value="NUCLEOID-ASSOCIATED PROTEIN YBAB"/>
    <property type="match status" value="1"/>
</dbReference>
<dbReference type="Pfam" id="PF02575">
    <property type="entry name" value="YbaB_DNA_bd"/>
    <property type="match status" value="1"/>
</dbReference>
<dbReference type="PIRSF" id="PIRSF004555">
    <property type="entry name" value="UCP004555"/>
    <property type="match status" value="1"/>
</dbReference>
<dbReference type="SUPFAM" id="SSF82607">
    <property type="entry name" value="YbaB-like"/>
    <property type="match status" value="1"/>
</dbReference>
<accession>P67260</accession>
<accession>Q8YEG9</accession>
<name>Y1909_BRUME</name>